<organism>
    <name type="scientific">Mycolicibacterium smegmatis (strain ATCC 700084 / mc(2)155)</name>
    <name type="common">Mycobacterium smegmatis</name>
    <dbReference type="NCBI Taxonomy" id="246196"/>
    <lineage>
        <taxon>Bacteria</taxon>
        <taxon>Bacillati</taxon>
        <taxon>Actinomycetota</taxon>
        <taxon>Actinomycetes</taxon>
        <taxon>Mycobacteriales</taxon>
        <taxon>Mycobacteriaceae</taxon>
        <taxon>Mycolicibacterium</taxon>
    </lineage>
</organism>
<name>LIPB_MYCS2</name>
<proteinExistence type="inferred from homology"/>
<feature type="chain" id="PRO_1000001109" description="Octanoyltransferase">
    <location>
        <begin position="1"/>
        <end position="228"/>
    </location>
</feature>
<feature type="domain" description="BPL/LPL catalytic" evidence="2">
    <location>
        <begin position="37"/>
        <end position="217"/>
    </location>
</feature>
<feature type="active site" description="Acyl-thioester intermediate" evidence="1">
    <location>
        <position position="178"/>
    </location>
</feature>
<feature type="binding site" evidence="1">
    <location>
        <begin position="75"/>
        <end position="82"/>
    </location>
    <ligand>
        <name>substrate</name>
    </ligand>
</feature>
<feature type="binding site" evidence="1">
    <location>
        <begin position="147"/>
        <end position="149"/>
    </location>
    <ligand>
        <name>substrate</name>
    </ligand>
</feature>
<feature type="binding site" evidence="1">
    <location>
        <begin position="160"/>
        <end position="162"/>
    </location>
    <ligand>
        <name>substrate</name>
    </ligand>
</feature>
<feature type="site" description="Lowers pKa of active site Cys" evidence="1">
    <location>
        <position position="144"/>
    </location>
</feature>
<keyword id="KW-0012">Acyltransferase</keyword>
<keyword id="KW-0963">Cytoplasm</keyword>
<keyword id="KW-1185">Reference proteome</keyword>
<keyword id="KW-0808">Transferase</keyword>
<accession>A0R074</accession>
<accession>I7GBS0</accession>
<reference key="1">
    <citation type="submission" date="2006-10" db="EMBL/GenBank/DDBJ databases">
        <authorList>
            <person name="Fleischmann R.D."/>
            <person name="Dodson R.J."/>
            <person name="Haft D.H."/>
            <person name="Merkel J.S."/>
            <person name="Nelson W.C."/>
            <person name="Fraser C.M."/>
        </authorList>
    </citation>
    <scope>NUCLEOTIDE SEQUENCE [LARGE SCALE GENOMIC DNA]</scope>
    <source>
        <strain>ATCC 700084 / mc(2)155</strain>
    </source>
</reference>
<reference key="2">
    <citation type="journal article" date="2007" name="Genome Biol.">
        <title>Interrupted coding sequences in Mycobacterium smegmatis: authentic mutations or sequencing errors?</title>
        <authorList>
            <person name="Deshayes C."/>
            <person name="Perrodou E."/>
            <person name="Gallien S."/>
            <person name="Euphrasie D."/>
            <person name="Schaeffer C."/>
            <person name="Van-Dorsselaer A."/>
            <person name="Poch O."/>
            <person name="Lecompte O."/>
            <person name="Reyrat J.-M."/>
        </authorList>
    </citation>
    <scope>NUCLEOTIDE SEQUENCE [LARGE SCALE GENOMIC DNA]</scope>
    <source>
        <strain>ATCC 700084 / mc(2)155</strain>
    </source>
</reference>
<reference key="3">
    <citation type="journal article" date="2009" name="Genome Res.">
        <title>Ortho-proteogenomics: multiple proteomes investigation through orthology and a new MS-based protocol.</title>
        <authorList>
            <person name="Gallien S."/>
            <person name="Perrodou E."/>
            <person name="Carapito C."/>
            <person name="Deshayes C."/>
            <person name="Reyrat J.-M."/>
            <person name="Van Dorsselaer A."/>
            <person name="Poch O."/>
            <person name="Schaeffer C."/>
            <person name="Lecompte O."/>
        </authorList>
    </citation>
    <scope>NUCLEOTIDE SEQUENCE [LARGE SCALE GENOMIC DNA]</scope>
    <source>
        <strain>ATCC 700084 / mc(2)155</strain>
    </source>
</reference>
<sequence length="228" mass="24414">MTSIRSASTPVEVRRLGTLDYTSAWQLQRETADARVAGGPDTLLLLEHPPVYTAGKRTEPHERPLDGTPVVDTDRGGKITWHGPGQLVGYPIIGLTEPLDVVNFVRRLEESLITVCAELGLHTERVEGRSGVWVPADDLRPARKIGAIGIRVSRATTLHGFALNCDCDLSAFSSIIPCGITDAGVTSLTAELGRRVTVDEVADRVAAAVCDALDGRLPVGHHETLNVG</sequence>
<evidence type="ECO:0000255" key="1">
    <source>
        <dbReference type="HAMAP-Rule" id="MF_00013"/>
    </source>
</evidence>
<evidence type="ECO:0000255" key="2">
    <source>
        <dbReference type="PROSITE-ProRule" id="PRU01067"/>
    </source>
</evidence>
<dbReference type="EC" id="2.3.1.181" evidence="1"/>
<dbReference type="EMBL" id="CP000480">
    <property type="protein sequence ID" value="ABK70306.1"/>
    <property type="molecule type" value="Genomic_DNA"/>
</dbReference>
<dbReference type="EMBL" id="CP001663">
    <property type="protein sequence ID" value="AFP40641.1"/>
    <property type="molecule type" value="Genomic_DNA"/>
</dbReference>
<dbReference type="RefSeq" id="WP_003895681.1">
    <property type="nucleotide sequence ID" value="NZ_SIJM01000003.1"/>
</dbReference>
<dbReference type="RefSeq" id="YP_888562.1">
    <property type="nucleotide sequence ID" value="NC_008596.1"/>
</dbReference>
<dbReference type="SMR" id="A0R074"/>
<dbReference type="STRING" id="246196.MSMEG_4285"/>
<dbReference type="PaxDb" id="246196-MSMEI_4184"/>
<dbReference type="GeneID" id="93459003"/>
<dbReference type="KEGG" id="msb:LJ00_21240"/>
<dbReference type="KEGG" id="msg:MSMEI_4184"/>
<dbReference type="KEGG" id="msm:MSMEG_4285"/>
<dbReference type="PATRIC" id="fig|246196.19.peg.4205"/>
<dbReference type="eggNOG" id="COG0321">
    <property type="taxonomic scope" value="Bacteria"/>
</dbReference>
<dbReference type="OrthoDB" id="9787061at2"/>
<dbReference type="UniPathway" id="UPA00538">
    <property type="reaction ID" value="UER00592"/>
</dbReference>
<dbReference type="Proteomes" id="UP000000757">
    <property type="component" value="Chromosome"/>
</dbReference>
<dbReference type="Proteomes" id="UP000006158">
    <property type="component" value="Chromosome"/>
</dbReference>
<dbReference type="GO" id="GO:0005737">
    <property type="term" value="C:cytoplasm"/>
    <property type="evidence" value="ECO:0007669"/>
    <property type="project" value="UniProtKB-SubCell"/>
</dbReference>
<dbReference type="GO" id="GO:0033819">
    <property type="term" value="F:lipoyl(octanoyl) transferase activity"/>
    <property type="evidence" value="ECO:0007669"/>
    <property type="project" value="UniProtKB-EC"/>
</dbReference>
<dbReference type="GO" id="GO:0036211">
    <property type="term" value="P:protein modification process"/>
    <property type="evidence" value="ECO:0007669"/>
    <property type="project" value="InterPro"/>
</dbReference>
<dbReference type="CDD" id="cd16444">
    <property type="entry name" value="LipB"/>
    <property type="match status" value="1"/>
</dbReference>
<dbReference type="FunFam" id="3.30.930.10:FF:000035">
    <property type="entry name" value="Putative lipoyltransferase 2, mitochondrial"/>
    <property type="match status" value="1"/>
</dbReference>
<dbReference type="Gene3D" id="3.30.930.10">
    <property type="entry name" value="Bira Bifunctional Protein, Domain 2"/>
    <property type="match status" value="1"/>
</dbReference>
<dbReference type="HAMAP" id="MF_00013">
    <property type="entry name" value="LipB"/>
    <property type="match status" value="1"/>
</dbReference>
<dbReference type="InterPro" id="IPR045864">
    <property type="entry name" value="aa-tRNA-synth_II/BPL/LPL"/>
</dbReference>
<dbReference type="InterPro" id="IPR004143">
    <property type="entry name" value="BPL_LPL_catalytic"/>
</dbReference>
<dbReference type="InterPro" id="IPR000544">
    <property type="entry name" value="Octanoyltransferase"/>
</dbReference>
<dbReference type="InterPro" id="IPR020605">
    <property type="entry name" value="Octanoyltransferase_CS"/>
</dbReference>
<dbReference type="NCBIfam" id="TIGR00214">
    <property type="entry name" value="lipB"/>
    <property type="match status" value="1"/>
</dbReference>
<dbReference type="NCBIfam" id="NF010925">
    <property type="entry name" value="PRK14345.1"/>
    <property type="match status" value="1"/>
</dbReference>
<dbReference type="PANTHER" id="PTHR10993:SF7">
    <property type="entry name" value="LIPOYLTRANSFERASE 2, MITOCHONDRIAL-RELATED"/>
    <property type="match status" value="1"/>
</dbReference>
<dbReference type="PANTHER" id="PTHR10993">
    <property type="entry name" value="OCTANOYLTRANSFERASE"/>
    <property type="match status" value="1"/>
</dbReference>
<dbReference type="Pfam" id="PF21948">
    <property type="entry name" value="LplA-B_cat"/>
    <property type="match status" value="1"/>
</dbReference>
<dbReference type="PIRSF" id="PIRSF016262">
    <property type="entry name" value="LPLase"/>
    <property type="match status" value="1"/>
</dbReference>
<dbReference type="SUPFAM" id="SSF55681">
    <property type="entry name" value="Class II aaRS and biotin synthetases"/>
    <property type="match status" value="1"/>
</dbReference>
<dbReference type="PROSITE" id="PS51733">
    <property type="entry name" value="BPL_LPL_CATALYTIC"/>
    <property type="match status" value="1"/>
</dbReference>
<dbReference type="PROSITE" id="PS01313">
    <property type="entry name" value="LIPB"/>
    <property type="match status" value="1"/>
</dbReference>
<protein>
    <recommendedName>
        <fullName evidence="1">Octanoyltransferase</fullName>
        <ecNumber evidence="1">2.3.1.181</ecNumber>
    </recommendedName>
    <alternativeName>
        <fullName evidence="1">Lipoate-protein ligase B</fullName>
    </alternativeName>
    <alternativeName>
        <fullName evidence="1">Lipoyl/octanoyl transferase</fullName>
    </alternativeName>
    <alternativeName>
        <fullName evidence="1">Octanoyl-[acyl-carrier-protein]-protein N-octanoyltransferase</fullName>
    </alternativeName>
</protein>
<gene>
    <name evidence="1" type="primary">lipB</name>
    <name type="ordered locus">MSMEG_4285</name>
    <name type="ordered locus">MSMEI_4184</name>
</gene>
<comment type="function">
    <text evidence="1">Catalyzes the transfer of endogenously produced octanoic acid from octanoyl-acyl-carrier-protein onto the lipoyl domains of lipoate-dependent enzymes. Lipoyl-ACP can also act as a substrate although octanoyl-ACP is likely to be the physiological substrate.</text>
</comment>
<comment type="catalytic activity">
    <reaction evidence="1">
        <text>octanoyl-[ACP] + L-lysyl-[protein] = N(6)-octanoyl-L-lysyl-[protein] + holo-[ACP] + H(+)</text>
        <dbReference type="Rhea" id="RHEA:17665"/>
        <dbReference type="Rhea" id="RHEA-COMP:9636"/>
        <dbReference type="Rhea" id="RHEA-COMP:9685"/>
        <dbReference type="Rhea" id="RHEA-COMP:9752"/>
        <dbReference type="Rhea" id="RHEA-COMP:9928"/>
        <dbReference type="ChEBI" id="CHEBI:15378"/>
        <dbReference type="ChEBI" id="CHEBI:29969"/>
        <dbReference type="ChEBI" id="CHEBI:64479"/>
        <dbReference type="ChEBI" id="CHEBI:78463"/>
        <dbReference type="ChEBI" id="CHEBI:78809"/>
        <dbReference type="EC" id="2.3.1.181"/>
    </reaction>
</comment>
<comment type="pathway">
    <text evidence="1">Protein modification; protein lipoylation via endogenous pathway; protein N(6)-(lipoyl)lysine from octanoyl-[acyl-carrier-protein]: step 1/2.</text>
</comment>
<comment type="subcellular location">
    <subcellularLocation>
        <location evidence="1">Cytoplasm</location>
    </subcellularLocation>
</comment>
<comment type="miscellaneous">
    <text evidence="1">In the reaction, the free carboxyl group of octanoic acid is attached via an amide linkage to the epsilon-amino group of a specific lysine residue of lipoyl domains of lipoate-dependent enzymes.</text>
</comment>
<comment type="similarity">
    <text evidence="1">Belongs to the LipB family.</text>
</comment>